<sequence length="219" mass="24595">MKAINIALDGPAAAGKSTIAKRVASELSMIYVDTGAMYRALTYKYLKLNKTEDFAKLVDQTTLDLTYKADKGQCVILDNEDVTDFLRNNDVTQHVSYVASKEPVRSFAVKKQKELAAEKGIVMDGRDIGTVVLPDADLKVYMIASVEERAERRYKDNQLRGIESNFEDLKRDIEARDQYDMNREISPLRKADDAVTLDTTGKSIEEVTDEILAMVSQIK</sequence>
<feature type="chain" id="PRO_1000048289" description="Cytidylate kinase">
    <location>
        <begin position="1"/>
        <end position="219"/>
    </location>
</feature>
<feature type="binding site" evidence="1">
    <location>
        <begin position="10"/>
        <end position="18"/>
    </location>
    <ligand>
        <name>ATP</name>
        <dbReference type="ChEBI" id="CHEBI:30616"/>
    </ligand>
</feature>
<name>KCY_STAA1</name>
<organism>
    <name type="scientific">Staphylococcus aureus (strain Mu3 / ATCC 700698)</name>
    <dbReference type="NCBI Taxonomy" id="418127"/>
    <lineage>
        <taxon>Bacteria</taxon>
        <taxon>Bacillati</taxon>
        <taxon>Bacillota</taxon>
        <taxon>Bacilli</taxon>
        <taxon>Bacillales</taxon>
        <taxon>Staphylococcaceae</taxon>
        <taxon>Staphylococcus</taxon>
    </lineage>
</organism>
<comment type="catalytic activity">
    <reaction evidence="1">
        <text>CMP + ATP = CDP + ADP</text>
        <dbReference type="Rhea" id="RHEA:11600"/>
        <dbReference type="ChEBI" id="CHEBI:30616"/>
        <dbReference type="ChEBI" id="CHEBI:58069"/>
        <dbReference type="ChEBI" id="CHEBI:60377"/>
        <dbReference type="ChEBI" id="CHEBI:456216"/>
        <dbReference type="EC" id="2.7.4.25"/>
    </reaction>
</comment>
<comment type="catalytic activity">
    <reaction evidence="1">
        <text>dCMP + ATP = dCDP + ADP</text>
        <dbReference type="Rhea" id="RHEA:25094"/>
        <dbReference type="ChEBI" id="CHEBI:30616"/>
        <dbReference type="ChEBI" id="CHEBI:57566"/>
        <dbReference type="ChEBI" id="CHEBI:58593"/>
        <dbReference type="ChEBI" id="CHEBI:456216"/>
        <dbReference type="EC" id="2.7.4.25"/>
    </reaction>
</comment>
<comment type="subcellular location">
    <subcellularLocation>
        <location evidence="1">Cytoplasm</location>
    </subcellularLocation>
</comment>
<comment type="similarity">
    <text evidence="1">Belongs to the cytidylate kinase family. Type 1 subfamily.</text>
</comment>
<keyword id="KW-0067">ATP-binding</keyword>
<keyword id="KW-0963">Cytoplasm</keyword>
<keyword id="KW-0418">Kinase</keyword>
<keyword id="KW-0547">Nucleotide-binding</keyword>
<keyword id="KW-0808">Transferase</keyword>
<protein>
    <recommendedName>
        <fullName evidence="1">Cytidylate kinase</fullName>
        <shortName evidence="1">CK</shortName>
        <ecNumber evidence="1">2.7.4.25</ecNumber>
    </recommendedName>
    <alternativeName>
        <fullName evidence="1">Cytidine monophosphate kinase</fullName>
        <shortName evidence="1">CMP kinase</shortName>
    </alternativeName>
</protein>
<proteinExistence type="inferred from homology"/>
<accession>A7X2I6</accession>
<dbReference type="EC" id="2.7.4.25" evidence="1"/>
<dbReference type="EMBL" id="AP009324">
    <property type="protein sequence ID" value="BAF78349.1"/>
    <property type="molecule type" value="Genomic_DNA"/>
</dbReference>
<dbReference type="RefSeq" id="WP_000644391.1">
    <property type="nucleotide sequence ID" value="NZ_CTYB01000006.1"/>
</dbReference>
<dbReference type="SMR" id="A7X2I6"/>
<dbReference type="KEGG" id="saw:SAHV_1466"/>
<dbReference type="HOGENOM" id="CLU_079959_0_2_9"/>
<dbReference type="GO" id="GO:0005829">
    <property type="term" value="C:cytosol"/>
    <property type="evidence" value="ECO:0007669"/>
    <property type="project" value="TreeGrafter"/>
</dbReference>
<dbReference type="GO" id="GO:0005524">
    <property type="term" value="F:ATP binding"/>
    <property type="evidence" value="ECO:0007669"/>
    <property type="project" value="UniProtKB-UniRule"/>
</dbReference>
<dbReference type="GO" id="GO:0036430">
    <property type="term" value="F:CMP kinase activity"/>
    <property type="evidence" value="ECO:0007669"/>
    <property type="project" value="RHEA"/>
</dbReference>
<dbReference type="GO" id="GO:0036431">
    <property type="term" value="F:dCMP kinase activity"/>
    <property type="evidence" value="ECO:0007669"/>
    <property type="project" value="RHEA"/>
</dbReference>
<dbReference type="GO" id="GO:0015949">
    <property type="term" value="P:nucleobase-containing small molecule interconversion"/>
    <property type="evidence" value="ECO:0007669"/>
    <property type="project" value="TreeGrafter"/>
</dbReference>
<dbReference type="GO" id="GO:0006220">
    <property type="term" value="P:pyrimidine nucleotide metabolic process"/>
    <property type="evidence" value="ECO:0007669"/>
    <property type="project" value="UniProtKB-UniRule"/>
</dbReference>
<dbReference type="CDD" id="cd02020">
    <property type="entry name" value="CMPK"/>
    <property type="match status" value="1"/>
</dbReference>
<dbReference type="Gene3D" id="3.40.50.300">
    <property type="entry name" value="P-loop containing nucleotide triphosphate hydrolases"/>
    <property type="match status" value="1"/>
</dbReference>
<dbReference type="HAMAP" id="MF_00238">
    <property type="entry name" value="Cytidyl_kinase_type1"/>
    <property type="match status" value="1"/>
</dbReference>
<dbReference type="InterPro" id="IPR003136">
    <property type="entry name" value="Cytidylate_kin"/>
</dbReference>
<dbReference type="InterPro" id="IPR011994">
    <property type="entry name" value="Cytidylate_kinase_dom"/>
</dbReference>
<dbReference type="InterPro" id="IPR027417">
    <property type="entry name" value="P-loop_NTPase"/>
</dbReference>
<dbReference type="NCBIfam" id="TIGR00017">
    <property type="entry name" value="cmk"/>
    <property type="match status" value="1"/>
</dbReference>
<dbReference type="PANTHER" id="PTHR21299:SF2">
    <property type="entry name" value="CYTIDYLATE KINASE"/>
    <property type="match status" value="1"/>
</dbReference>
<dbReference type="PANTHER" id="PTHR21299">
    <property type="entry name" value="CYTIDYLATE KINASE/PANTOATE-BETA-ALANINE LIGASE"/>
    <property type="match status" value="1"/>
</dbReference>
<dbReference type="Pfam" id="PF02224">
    <property type="entry name" value="Cytidylate_kin"/>
    <property type="match status" value="1"/>
</dbReference>
<dbReference type="SUPFAM" id="SSF52540">
    <property type="entry name" value="P-loop containing nucleoside triphosphate hydrolases"/>
    <property type="match status" value="1"/>
</dbReference>
<reference key="1">
    <citation type="journal article" date="2008" name="Antimicrob. Agents Chemother.">
        <title>Mutated response regulator graR is responsible for phenotypic conversion of Staphylococcus aureus from heterogeneous vancomycin-intermediate resistance to vancomycin-intermediate resistance.</title>
        <authorList>
            <person name="Neoh H.-M."/>
            <person name="Cui L."/>
            <person name="Yuzawa H."/>
            <person name="Takeuchi F."/>
            <person name="Matsuo M."/>
            <person name="Hiramatsu K."/>
        </authorList>
    </citation>
    <scope>NUCLEOTIDE SEQUENCE [LARGE SCALE GENOMIC DNA]</scope>
    <source>
        <strain>Mu3 / ATCC 700698</strain>
    </source>
</reference>
<gene>
    <name evidence="1" type="primary">cmk</name>
    <name type="ordered locus">SAHV_1466</name>
</gene>
<evidence type="ECO:0000255" key="1">
    <source>
        <dbReference type="HAMAP-Rule" id="MF_00238"/>
    </source>
</evidence>